<name>LSPA_MYCTO</name>
<accession>P9WK98</accession>
<accession>L0T9X3</accession>
<accession>P65262</accession>
<accession>Q10764</accession>
<feature type="chain" id="PRO_0000427691" description="Lipoprotein signal peptidase">
    <location>
        <begin position="1"/>
        <end position="202"/>
    </location>
</feature>
<feature type="transmembrane region" description="Helical" evidence="1">
    <location>
        <begin position="35"/>
        <end position="55"/>
    </location>
</feature>
<feature type="transmembrane region" description="Helical" evidence="1">
    <location>
        <begin position="88"/>
        <end position="108"/>
    </location>
</feature>
<feature type="transmembrane region" description="Helical" evidence="1">
    <location>
        <begin position="112"/>
        <end position="132"/>
    </location>
</feature>
<feature type="transmembrane region" description="Helical" evidence="1">
    <location>
        <begin position="160"/>
        <end position="180"/>
    </location>
</feature>
<feature type="region of interest" description="Disordered" evidence="2">
    <location>
        <begin position="1"/>
        <end position="29"/>
    </location>
</feature>
<feature type="active site" evidence="1">
    <location>
        <position position="148"/>
    </location>
</feature>
<feature type="active site" evidence="1">
    <location>
        <position position="162"/>
    </location>
</feature>
<protein>
    <recommendedName>
        <fullName evidence="1">Lipoprotein signal peptidase</fullName>
        <ecNumber evidence="1">3.4.23.36</ecNumber>
    </recommendedName>
    <alternativeName>
        <fullName evidence="1">Prolipoprotein signal peptidase</fullName>
    </alternativeName>
    <alternativeName>
        <fullName evidence="1">Signal peptidase II</fullName>
        <shortName evidence="1">SPase II</shortName>
    </alternativeName>
</protein>
<sequence>MPDEPTGSADPLTSTEEAGGAGEPNAPAPPRRLRMLLSVAVVVLTLDIVTKVVAVQLLPPGQPVSIIGDTVTWTLVRNSGAAFSMATGYTWVLTLIATGVVVGIFWMGRRLVSPWWALGLGMILGGAMGNLVDRFFRAPGPLRGHVVDFLSVGWWPVFNVADPSVVGGAILLVILSIFGFDFDTVGRRHADGDTVGRRKADG</sequence>
<gene>
    <name evidence="1" type="primary">lspA</name>
    <name type="ordered locus">MT1591</name>
</gene>
<keyword id="KW-0064">Aspartyl protease</keyword>
<keyword id="KW-1003">Cell membrane</keyword>
<keyword id="KW-0378">Hydrolase</keyword>
<keyword id="KW-0472">Membrane</keyword>
<keyword id="KW-0645">Protease</keyword>
<keyword id="KW-1185">Reference proteome</keyword>
<keyword id="KW-0812">Transmembrane</keyword>
<keyword id="KW-1133">Transmembrane helix</keyword>
<comment type="function">
    <text evidence="1">This protein specifically catalyzes the removal of signal peptides from prolipoproteins.</text>
</comment>
<comment type="catalytic activity">
    <reaction evidence="1">
        <text>Release of signal peptides from bacterial membrane prolipoproteins. Hydrolyzes -Xaa-Yaa-Zaa-|-(S,diacylglyceryl)Cys-, in which Xaa is hydrophobic (preferably Leu), and Yaa (Ala or Ser) and Zaa (Gly or Ala) have small, neutral side chains.</text>
        <dbReference type="EC" id="3.4.23.36"/>
    </reaction>
</comment>
<comment type="pathway">
    <text evidence="1">Protein modification; lipoprotein biosynthesis (signal peptide cleavage).</text>
</comment>
<comment type="subcellular location">
    <subcellularLocation>
        <location evidence="1">Cell membrane</location>
        <topology evidence="1">Multi-pass membrane protein</topology>
    </subcellularLocation>
</comment>
<comment type="similarity">
    <text evidence="1 3">Belongs to the peptidase A8 family.</text>
</comment>
<dbReference type="EC" id="3.4.23.36" evidence="1"/>
<dbReference type="EMBL" id="AE000516">
    <property type="protein sequence ID" value="AAK45857.1"/>
    <property type="molecule type" value="Genomic_DNA"/>
</dbReference>
<dbReference type="PIR" id="H70760">
    <property type="entry name" value="H70760"/>
</dbReference>
<dbReference type="RefSeq" id="WP_003407722.1">
    <property type="nucleotide sequence ID" value="NZ_KK341227.1"/>
</dbReference>
<dbReference type="SMR" id="P9WK98"/>
<dbReference type="GeneID" id="45425522"/>
<dbReference type="KEGG" id="mtc:MT1591"/>
<dbReference type="PATRIC" id="fig|83331.31.peg.1712"/>
<dbReference type="HOGENOM" id="CLU_083252_2_2_11"/>
<dbReference type="UniPathway" id="UPA00665"/>
<dbReference type="Proteomes" id="UP000001020">
    <property type="component" value="Chromosome"/>
</dbReference>
<dbReference type="GO" id="GO:0005886">
    <property type="term" value="C:plasma membrane"/>
    <property type="evidence" value="ECO:0007669"/>
    <property type="project" value="UniProtKB-SubCell"/>
</dbReference>
<dbReference type="GO" id="GO:0004190">
    <property type="term" value="F:aspartic-type endopeptidase activity"/>
    <property type="evidence" value="ECO:0007669"/>
    <property type="project" value="UniProtKB-UniRule"/>
</dbReference>
<dbReference type="GO" id="GO:0006508">
    <property type="term" value="P:proteolysis"/>
    <property type="evidence" value="ECO:0007669"/>
    <property type="project" value="UniProtKB-KW"/>
</dbReference>
<dbReference type="HAMAP" id="MF_00161">
    <property type="entry name" value="LspA"/>
    <property type="match status" value="1"/>
</dbReference>
<dbReference type="InterPro" id="IPR001872">
    <property type="entry name" value="Peptidase_A8"/>
</dbReference>
<dbReference type="NCBIfam" id="TIGR00077">
    <property type="entry name" value="lspA"/>
    <property type="match status" value="1"/>
</dbReference>
<dbReference type="PANTHER" id="PTHR33695">
    <property type="entry name" value="LIPOPROTEIN SIGNAL PEPTIDASE"/>
    <property type="match status" value="1"/>
</dbReference>
<dbReference type="PANTHER" id="PTHR33695:SF1">
    <property type="entry name" value="LIPOPROTEIN SIGNAL PEPTIDASE"/>
    <property type="match status" value="1"/>
</dbReference>
<dbReference type="Pfam" id="PF01252">
    <property type="entry name" value="Peptidase_A8"/>
    <property type="match status" value="1"/>
</dbReference>
<dbReference type="PRINTS" id="PR00781">
    <property type="entry name" value="LIPOSIGPTASE"/>
</dbReference>
<dbReference type="PROSITE" id="PS00855">
    <property type="entry name" value="SPASE_II"/>
    <property type="match status" value="1"/>
</dbReference>
<organism>
    <name type="scientific">Mycobacterium tuberculosis (strain CDC 1551 / Oshkosh)</name>
    <dbReference type="NCBI Taxonomy" id="83331"/>
    <lineage>
        <taxon>Bacteria</taxon>
        <taxon>Bacillati</taxon>
        <taxon>Actinomycetota</taxon>
        <taxon>Actinomycetes</taxon>
        <taxon>Mycobacteriales</taxon>
        <taxon>Mycobacteriaceae</taxon>
        <taxon>Mycobacterium</taxon>
        <taxon>Mycobacterium tuberculosis complex</taxon>
    </lineage>
</organism>
<proteinExistence type="inferred from homology"/>
<evidence type="ECO:0000255" key="1">
    <source>
        <dbReference type="HAMAP-Rule" id="MF_00161"/>
    </source>
</evidence>
<evidence type="ECO:0000256" key="2">
    <source>
        <dbReference type="SAM" id="MobiDB-lite"/>
    </source>
</evidence>
<evidence type="ECO:0000305" key="3"/>
<reference key="1">
    <citation type="journal article" date="2002" name="J. Bacteriol.">
        <title>Whole-genome comparison of Mycobacterium tuberculosis clinical and laboratory strains.</title>
        <authorList>
            <person name="Fleischmann R.D."/>
            <person name="Alland D."/>
            <person name="Eisen J.A."/>
            <person name="Carpenter L."/>
            <person name="White O."/>
            <person name="Peterson J.D."/>
            <person name="DeBoy R.T."/>
            <person name="Dodson R.J."/>
            <person name="Gwinn M.L."/>
            <person name="Haft D.H."/>
            <person name="Hickey E.K."/>
            <person name="Kolonay J.F."/>
            <person name="Nelson W.C."/>
            <person name="Umayam L.A."/>
            <person name="Ermolaeva M.D."/>
            <person name="Salzberg S.L."/>
            <person name="Delcher A."/>
            <person name="Utterback T.R."/>
            <person name="Weidman J.F."/>
            <person name="Khouri H.M."/>
            <person name="Gill J."/>
            <person name="Mikula A."/>
            <person name="Bishai W."/>
            <person name="Jacobs W.R. Jr."/>
            <person name="Venter J.C."/>
            <person name="Fraser C.M."/>
        </authorList>
    </citation>
    <scope>NUCLEOTIDE SEQUENCE [LARGE SCALE GENOMIC DNA]</scope>
    <source>
        <strain>CDC 1551 / Oshkosh</strain>
    </source>
</reference>